<comment type="catalytic activity">
    <reaction>
        <text>an aldehyde + NAD(+) + H2O = a carboxylate + NADH + 2 H(+)</text>
        <dbReference type="Rhea" id="RHEA:16185"/>
        <dbReference type="ChEBI" id="CHEBI:15377"/>
        <dbReference type="ChEBI" id="CHEBI:15378"/>
        <dbReference type="ChEBI" id="CHEBI:17478"/>
        <dbReference type="ChEBI" id="CHEBI:29067"/>
        <dbReference type="ChEBI" id="CHEBI:57540"/>
        <dbReference type="ChEBI" id="CHEBI:57945"/>
        <dbReference type="EC" id="1.2.1.3"/>
    </reaction>
</comment>
<comment type="pathway">
    <text>Alcohol metabolism; ethanol degradation; acetate from ethanol: step 2/2.</text>
</comment>
<comment type="similarity">
    <text evidence="4">Belongs to the aldehyde dehydrogenase family.</text>
</comment>
<keyword id="KW-0520">NAD</keyword>
<keyword id="KW-0560">Oxidoreductase</keyword>
<gene>
    <name type="primary">aldA</name>
</gene>
<proteinExistence type="inferred from homology"/>
<sequence>MSDLFATITTPNGVKYEQPLGLFIDGEFVKGAEGKTFETINPSNEKPIVAVHEATEKDVDTAVAAARKAFEGSWRQVTPSTRGRMLTKLADLFERDAEILASIEALDNGKSITMAHGDIAGAAGCLRYYGGWADKIHGQTIDTNSETLNYTRHEPIGVCGQIIPWNFPLLMWAWKIGPAIATGNTVVIKTAEQTPLSGLYAANVIKEAGIPAGVVNVISGFGRVAGSAISHHMDIDKVAFTGSTLVGRTILQAAAKSNLKKVTLELGGKSPNIVFNDADIDNAISWANFGIFYNHGQCCCAGSRILVQEGIYDKFIARLKERALQNKVGDPFAKDTFQGPQVSQLQFDRIMEYIQHGKDAGATVAVGGERHGTEGYFIQPTVFTDVTSDMKINQEEIFGPVVTVQKFKDVEDAIKIGNSTSYGLAAGIHTKDVTTAIRVSNALRAGTVWVNSYNLIQYQVPFGGFKESGIGRELGSYALENYTQIKAVHYRLGDALF</sequence>
<name>ALDH_ASPNG</name>
<protein>
    <recommendedName>
        <fullName>Aldehyde dehydrogenase</fullName>
        <shortName>ALDDH</shortName>
        <shortName>ALDH</shortName>
        <ecNumber>1.2.1.3</ecNumber>
    </recommendedName>
</protein>
<organism>
    <name type="scientific">Aspergillus niger</name>
    <dbReference type="NCBI Taxonomy" id="5061"/>
    <lineage>
        <taxon>Eukaryota</taxon>
        <taxon>Fungi</taxon>
        <taxon>Dikarya</taxon>
        <taxon>Ascomycota</taxon>
        <taxon>Pezizomycotina</taxon>
        <taxon>Eurotiomycetes</taxon>
        <taxon>Eurotiomycetidae</taxon>
        <taxon>Eurotiales</taxon>
        <taxon>Aspergillaceae</taxon>
        <taxon>Aspergillus</taxon>
        <taxon>Aspergillus subgen. Circumdati</taxon>
    </lineage>
</organism>
<reference key="1">
    <citation type="journal article" date="1989" name="Gene">
        <title>Physical characterization of the aldehyde-dehydrogenase-encoding gene of Aspergillus niger.</title>
        <authorList>
            <person name="O'Connell M.J."/>
            <person name="Kelly J.M."/>
        </authorList>
    </citation>
    <scope>NUCLEOTIDE SEQUENCE [GENOMIC DNA]</scope>
</reference>
<feature type="chain" id="PRO_0000056436" description="Aldehyde dehydrogenase">
    <location>
        <begin position="1"/>
        <end position="497"/>
    </location>
</feature>
<feature type="active site" description="Proton acceptor" evidence="2 3">
    <location>
        <position position="265"/>
    </location>
</feature>
<feature type="active site" description="Nucleophile" evidence="2 3">
    <location>
        <position position="299"/>
    </location>
</feature>
<feature type="binding site" evidence="1">
    <location>
        <begin position="242"/>
        <end position="247"/>
    </location>
    <ligand>
        <name>NAD(+)</name>
        <dbReference type="ChEBI" id="CHEBI:57540"/>
    </ligand>
</feature>
<feature type="site" description="Transition state stabilizer" evidence="1">
    <location>
        <position position="166"/>
    </location>
</feature>
<evidence type="ECO:0000250" key="1"/>
<evidence type="ECO:0000255" key="2">
    <source>
        <dbReference type="PROSITE-ProRule" id="PRU10007"/>
    </source>
</evidence>
<evidence type="ECO:0000255" key="3">
    <source>
        <dbReference type="PROSITE-ProRule" id="PRU10008"/>
    </source>
</evidence>
<evidence type="ECO:0000305" key="4"/>
<accession>P41751</accession>
<dbReference type="EC" id="1.2.1.3"/>
<dbReference type="EMBL" id="M32351">
    <property type="protein sequence ID" value="AAA87596.1"/>
    <property type="molecule type" value="Genomic_DNA"/>
</dbReference>
<dbReference type="SMR" id="P41751"/>
<dbReference type="PaxDb" id="5061-CADANGAP00006922"/>
<dbReference type="VEuPathDB" id="FungiDB:An08g07290"/>
<dbReference type="VEuPathDB" id="FungiDB:ASPNIDRAFT2_1148193"/>
<dbReference type="VEuPathDB" id="FungiDB:ATCC64974_100780"/>
<dbReference type="VEuPathDB" id="FungiDB:M747DRAFT_264904"/>
<dbReference type="eggNOG" id="KOG2450">
    <property type="taxonomic scope" value="Eukaryota"/>
</dbReference>
<dbReference type="UniPathway" id="UPA00780">
    <property type="reaction ID" value="UER00768"/>
</dbReference>
<dbReference type="GO" id="GO:0004029">
    <property type="term" value="F:aldehyde dehydrogenase (NAD+) activity"/>
    <property type="evidence" value="ECO:0007669"/>
    <property type="project" value="UniProtKB-EC"/>
</dbReference>
<dbReference type="GO" id="GO:0006068">
    <property type="term" value="P:ethanol catabolic process"/>
    <property type="evidence" value="ECO:0007669"/>
    <property type="project" value="UniProtKB-UniPathway"/>
</dbReference>
<dbReference type="CDD" id="cd07091">
    <property type="entry name" value="ALDH_F1-2_Ald2-like"/>
    <property type="match status" value="1"/>
</dbReference>
<dbReference type="FunFam" id="3.40.605.10:FF:000011">
    <property type="entry name" value="ALD5p Mitochondrial aldehyde dehydrogenase"/>
    <property type="match status" value="1"/>
</dbReference>
<dbReference type="FunFam" id="3.40.605.10:FF:000026">
    <property type="entry name" value="Aldehyde dehydrogenase, putative"/>
    <property type="match status" value="1"/>
</dbReference>
<dbReference type="FunFam" id="3.40.309.10:FF:000001">
    <property type="entry name" value="Mitochondrial aldehyde dehydrogenase 2"/>
    <property type="match status" value="1"/>
</dbReference>
<dbReference type="Gene3D" id="3.40.605.10">
    <property type="entry name" value="Aldehyde Dehydrogenase, Chain A, domain 1"/>
    <property type="match status" value="1"/>
</dbReference>
<dbReference type="Gene3D" id="3.40.309.10">
    <property type="entry name" value="Aldehyde Dehydrogenase, Chain A, domain 2"/>
    <property type="match status" value="1"/>
</dbReference>
<dbReference type="InterPro" id="IPR016161">
    <property type="entry name" value="Ald_DH/histidinol_DH"/>
</dbReference>
<dbReference type="InterPro" id="IPR016163">
    <property type="entry name" value="Ald_DH_C"/>
</dbReference>
<dbReference type="InterPro" id="IPR016160">
    <property type="entry name" value="Ald_DH_CS_CYS"/>
</dbReference>
<dbReference type="InterPro" id="IPR029510">
    <property type="entry name" value="Ald_DH_CS_GLU"/>
</dbReference>
<dbReference type="InterPro" id="IPR016162">
    <property type="entry name" value="Ald_DH_N"/>
</dbReference>
<dbReference type="InterPro" id="IPR015590">
    <property type="entry name" value="Aldehyde_DH_dom"/>
</dbReference>
<dbReference type="PANTHER" id="PTHR11699">
    <property type="entry name" value="ALDEHYDE DEHYDROGENASE-RELATED"/>
    <property type="match status" value="1"/>
</dbReference>
<dbReference type="Pfam" id="PF00171">
    <property type="entry name" value="Aldedh"/>
    <property type="match status" value="1"/>
</dbReference>
<dbReference type="SUPFAM" id="SSF53720">
    <property type="entry name" value="ALDH-like"/>
    <property type="match status" value="1"/>
</dbReference>
<dbReference type="PROSITE" id="PS00070">
    <property type="entry name" value="ALDEHYDE_DEHYDR_CYS"/>
    <property type="match status" value="1"/>
</dbReference>
<dbReference type="PROSITE" id="PS00687">
    <property type="entry name" value="ALDEHYDE_DEHYDR_GLU"/>
    <property type="match status" value="1"/>
</dbReference>